<proteinExistence type="inferred from homology"/>
<accession>Q750N3</accession>
<name>RGT1_EREGS</name>
<feature type="chain" id="PRO_0000408012" description="Glucose transport transcription regulator RGT1">
    <location>
        <begin position="1"/>
        <end position="856"/>
    </location>
</feature>
<feature type="DNA-binding region" description="Zn(2)-C6 fungal-type" evidence="2">
    <location>
        <begin position="46"/>
        <end position="75"/>
    </location>
</feature>
<feature type="region of interest" description="Disordered" evidence="3">
    <location>
        <begin position="1"/>
        <end position="42"/>
    </location>
</feature>
<feature type="region of interest" description="Disordered" evidence="3">
    <location>
        <begin position="83"/>
        <end position="121"/>
    </location>
</feature>
<feature type="region of interest" description="Disordered" evidence="3">
    <location>
        <begin position="168"/>
        <end position="244"/>
    </location>
</feature>
<feature type="region of interest" description="Disordered" evidence="3">
    <location>
        <begin position="261"/>
        <end position="330"/>
    </location>
</feature>
<feature type="compositionally biased region" description="Low complexity" evidence="3">
    <location>
        <begin position="1"/>
        <end position="13"/>
    </location>
</feature>
<feature type="compositionally biased region" description="Basic and acidic residues" evidence="3">
    <location>
        <begin position="18"/>
        <end position="37"/>
    </location>
</feature>
<feature type="compositionally biased region" description="Basic and acidic residues" evidence="3">
    <location>
        <begin position="99"/>
        <end position="117"/>
    </location>
</feature>
<feature type="compositionally biased region" description="Polar residues" evidence="3">
    <location>
        <begin position="168"/>
        <end position="183"/>
    </location>
</feature>
<feature type="compositionally biased region" description="Low complexity" evidence="3">
    <location>
        <begin position="184"/>
        <end position="207"/>
    </location>
</feature>
<feature type="compositionally biased region" description="Low complexity" evidence="3">
    <location>
        <begin position="261"/>
        <end position="270"/>
    </location>
</feature>
<feature type="compositionally biased region" description="Low complexity" evidence="3">
    <location>
        <begin position="277"/>
        <end position="294"/>
    </location>
</feature>
<feature type="compositionally biased region" description="Polar residues" evidence="3">
    <location>
        <begin position="303"/>
        <end position="312"/>
    </location>
</feature>
<evidence type="ECO:0000250" key="1"/>
<evidence type="ECO:0000255" key="2">
    <source>
        <dbReference type="PROSITE-ProRule" id="PRU00227"/>
    </source>
</evidence>
<evidence type="ECO:0000256" key="3">
    <source>
        <dbReference type="SAM" id="MobiDB-lite"/>
    </source>
</evidence>
<evidence type="ECO:0000305" key="4"/>
<reference key="1">
    <citation type="journal article" date="2004" name="Science">
        <title>The Ashbya gossypii genome as a tool for mapping the ancient Saccharomyces cerevisiae genome.</title>
        <authorList>
            <person name="Dietrich F.S."/>
            <person name="Voegeli S."/>
            <person name="Brachat S."/>
            <person name="Lerch A."/>
            <person name="Gates K."/>
            <person name="Steiner S."/>
            <person name="Mohr C."/>
            <person name="Poehlmann R."/>
            <person name="Luedi P."/>
            <person name="Choi S."/>
            <person name="Wing R.A."/>
            <person name="Flavier A."/>
            <person name="Gaffney T.D."/>
            <person name="Philippsen P."/>
        </authorList>
    </citation>
    <scope>NUCLEOTIDE SEQUENCE [LARGE SCALE GENOMIC DNA]</scope>
    <source>
        <strain>ATCC 10895 / CBS 109.51 / FGSC 9923 / NRRL Y-1056</strain>
    </source>
</reference>
<reference key="2">
    <citation type="journal article" date="2013" name="G3 (Bethesda)">
        <title>Genomes of Ashbya fungi isolated from insects reveal four mating-type loci, numerous translocations, lack of transposons, and distinct gene duplications.</title>
        <authorList>
            <person name="Dietrich F.S."/>
            <person name="Voegeli S."/>
            <person name="Kuo S."/>
            <person name="Philippsen P."/>
        </authorList>
    </citation>
    <scope>GENOME REANNOTATION</scope>
    <source>
        <strain>ATCC 10895 / CBS 109.51 / FGSC 9923 / NRRL Y-1056</strain>
    </source>
</reference>
<organism>
    <name type="scientific">Eremothecium gossypii (strain ATCC 10895 / CBS 109.51 / FGSC 9923 / NRRL Y-1056)</name>
    <name type="common">Yeast</name>
    <name type="synonym">Ashbya gossypii</name>
    <dbReference type="NCBI Taxonomy" id="284811"/>
    <lineage>
        <taxon>Eukaryota</taxon>
        <taxon>Fungi</taxon>
        <taxon>Dikarya</taxon>
        <taxon>Ascomycota</taxon>
        <taxon>Saccharomycotina</taxon>
        <taxon>Saccharomycetes</taxon>
        <taxon>Saccharomycetales</taxon>
        <taxon>Saccharomycetaceae</taxon>
        <taxon>Eremothecium</taxon>
    </lineage>
</organism>
<comment type="function">
    <text evidence="1">Glucose-responsive transcription factor that regulates expression of several glucose transporter (HXT) genes in response to glucose. In the absence of glucose, it functions as a transcriptional repressor, whereas high concentrations of glucose cause it to function as a transcriptional activator. In cells growing on low levels of glucose, has a neutral role, neither repressing nor activating transcription (By similarity).</text>
</comment>
<comment type="subcellular location">
    <subcellularLocation>
        <location evidence="2">Nucleus</location>
    </subcellularLocation>
    <subcellularLocation>
        <location evidence="1">Cytoplasm</location>
    </subcellularLocation>
</comment>
<comment type="similarity">
    <text evidence="4">Belongs to the EDS1/RGT1 family.</text>
</comment>
<dbReference type="EMBL" id="AE016820">
    <property type="protein sequence ID" value="AAS54407.1"/>
    <property type="molecule type" value="Genomic_DNA"/>
</dbReference>
<dbReference type="RefSeq" id="NP_986583.1">
    <property type="nucleotide sequence ID" value="NM_211645.1"/>
</dbReference>
<dbReference type="FunCoup" id="Q750N3">
    <property type="interactions" value="357"/>
</dbReference>
<dbReference type="STRING" id="284811.Q750N3"/>
<dbReference type="EnsemblFungi" id="AAS54407">
    <property type="protein sequence ID" value="AAS54407"/>
    <property type="gene ID" value="AGOS_AGL083W"/>
</dbReference>
<dbReference type="GeneID" id="4622882"/>
<dbReference type="KEGG" id="ago:AGOS_AGL083W"/>
<dbReference type="eggNOG" id="ENOG502QRVJ">
    <property type="taxonomic scope" value="Eukaryota"/>
</dbReference>
<dbReference type="HOGENOM" id="CLU_006525_0_0_1"/>
<dbReference type="InParanoid" id="Q750N3"/>
<dbReference type="OMA" id="HILENCC"/>
<dbReference type="OrthoDB" id="5426978at2759"/>
<dbReference type="Proteomes" id="UP000000591">
    <property type="component" value="Chromosome VII"/>
</dbReference>
<dbReference type="GO" id="GO:0005737">
    <property type="term" value="C:cytoplasm"/>
    <property type="evidence" value="ECO:0007669"/>
    <property type="project" value="UniProtKB-SubCell"/>
</dbReference>
<dbReference type="GO" id="GO:0005634">
    <property type="term" value="C:nucleus"/>
    <property type="evidence" value="ECO:0007669"/>
    <property type="project" value="UniProtKB-SubCell"/>
</dbReference>
<dbReference type="GO" id="GO:0003677">
    <property type="term" value="F:DNA binding"/>
    <property type="evidence" value="ECO:0007669"/>
    <property type="project" value="UniProtKB-KW"/>
</dbReference>
<dbReference type="GO" id="GO:0000981">
    <property type="term" value="F:DNA-binding transcription factor activity, RNA polymerase II-specific"/>
    <property type="evidence" value="ECO:0007669"/>
    <property type="project" value="InterPro"/>
</dbReference>
<dbReference type="GO" id="GO:0008270">
    <property type="term" value="F:zinc ion binding"/>
    <property type="evidence" value="ECO:0007669"/>
    <property type="project" value="InterPro"/>
</dbReference>
<dbReference type="CDD" id="cd00067">
    <property type="entry name" value="GAL4"/>
    <property type="match status" value="1"/>
</dbReference>
<dbReference type="Gene3D" id="4.10.240.10">
    <property type="entry name" value="Zn(2)-C6 fungal-type DNA-binding domain"/>
    <property type="match status" value="1"/>
</dbReference>
<dbReference type="InterPro" id="IPR050797">
    <property type="entry name" value="Carb_Metab_Trans_Reg"/>
</dbReference>
<dbReference type="InterPro" id="IPR036864">
    <property type="entry name" value="Zn2-C6_fun-type_DNA-bd_sf"/>
</dbReference>
<dbReference type="InterPro" id="IPR001138">
    <property type="entry name" value="Zn2Cys6_DnaBD"/>
</dbReference>
<dbReference type="PANTHER" id="PTHR31668:SF26">
    <property type="entry name" value="GLUCOSE TRANSPORT TRANSCRIPTION REGULATOR RGT1-RELATED"/>
    <property type="match status" value="1"/>
</dbReference>
<dbReference type="PANTHER" id="PTHR31668">
    <property type="entry name" value="GLUCOSE TRANSPORT TRANSCRIPTION REGULATOR RGT1-RELATED-RELATED"/>
    <property type="match status" value="1"/>
</dbReference>
<dbReference type="Pfam" id="PF00172">
    <property type="entry name" value="Zn_clus"/>
    <property type="match status" value="1"/>
</dbReference>
<dbReference type="SMART" id="SM00066">
    <property type="entry name" value="GAL4"/>
    <property type="match status" value="1"/>
</dbReference>
<dbReference type="SUPFAM" id="SSF57701">
    <property type="entry name" value="Zn2/Cys6 DNA-binding domain"/>
    <property type="match status" value="1"/>
</dbReference>
<dbReference type="PROSITE" id="PS00463">
    <property type="entry name" value="ZN2_CY6_FUNGAL_1"/>
    <property type="match status" value="1"/>
</dbReference>
<dbReference type="PROSITE" id="PS50048">
    <property type="entry name" value="ZN2_CY6_FUNGAL_2"/>
    <property type="match status" value="1"/>
</dbReference>
<gene>
    <name type="primary">RGT1</name>
    <name type="ordered locus">AGL083W</name>
</gene>
<protein>
    <recommendedName>
        <fullName>Glucose transport transcription regulator RGT1</fullName>
    </recommendedName>
    <alternativeName>
        <fullName>Restores glucose transport protein 1</fullName>
    </alternativeName>
</protein>
<keyword id="KW-0010">Activator</keyword>
<keyword id="KW-0963">Cytoplasm</keyword>
<keyword id="KW-0238">DNA-binding</keyword>
<keyword id="KW-0479">Metal-binding</keyword>
<keyword id="KW-0539">Nucleus</keyword>
<keyword id="KW-1185">Reference proteome</keyword>
<keyword id="KW-0678">Repressor</keyword>
<keyword id="KW-0804">Transcription</keyword>
<keyword id="KW-0805">Transcription regulation</keyword>
<keyword id="KW-0862">Zinc</keyword>
<sequence length="856" mass="92978">MNGATATATAAVGAEEEGGAREGSRRRDSVESAGDGRRRTKVSRACDQCRRKKIKCEYQEDAQSCSGCRKNSERCAFERVPLKRGPSKGYTRGEGAGDGARETEGARGELDTSRADGKAAPVSLPPLHYYLPISNGQPGGAPAQAPAAPFPPMKQQFWKVPYYENQMQRRSSLESVNSDASGPQSQQETYAASSASTSSHQRTSRSYFPSSDGASALFQEPCSSSYPPPLVRSSSTGGQLQQLPAPQYPYSQFAVALSGSTSASSQSVQLRTSATGSTSLPEDSSPSSSNAYSPQLRAHCMSESLTTPTAGSKTGGSVKRRKRLSEPADPIVPLSAREPRQAGHIGLPLQAQQATGKTGVICGKLSDAELIDAYYEYVHVNYPIIPINKETLTNEILLVNTQPISEVHEMNNYILYWFRVALELLLHVASDKTNQDTASGMDSNAVHDGGLYAHRGDFKQNEEHHVPHQSQLLAALNDCFRKLLDIHPKICAYQESTSPKVTTIYLSTYIIINYMLAMLGEDNTFVLGTSVTVFNEFKIYRLLVLHEVADEPGDDSADVERHGFELLYKRLYYSLLVFDALQSCCFGAPRLASLPISHLVEPLFAPPPPLDSAKWAVESDAARREPLLASIRLGALLTELCETRVLAGALPRAPTPALRAPRPFRVAPPADDSVPGAFFHALAAQRALLDRLLAIPAHPAFAADAPPDATVDLCAQLGDAICRFTSCVLDTLVRAGPRPASPFAAALSRALHHAINLSRNIPTSLIGCIIGTAVHHSRDRDLIVALSRCMSDMIQIQGLTHCLRPCAPPRPRARVSCDLRRLYGHDGPPASPHQVMLHQFIDIAWRLLRNDELGWF</sequence>